<organism>
    <name type="scientific">Acrantophis madagascariensis</name>
    <name type="common">Madagascar ground boa</name>
    <name type="synonym">Boa madagascariensis</name>
    <dbReference type="NCBI Taxonomy" id="51851"/>
    <lineage>
        <taxon>Eukaryota</taxon>
        <taxon>Metazoa</taxon>
        <taxon>Chordata</taxon>
        <taxon>Craniata</taxon>
        <taxon>Vertebrata</taxon>
        <taxon>Euteleostomi</taxon>
        <taxon>Lepidosauria</taxon>
        <taxon>Squamata</taxon>
        <taxon>Bifurcata</taxon>
        <taxon>Unidentata</taxon>
        <taxon>Episquamata</taxon>
        <taxon>Toxicofera</taxon>
        <taxon>Serpentes</taxon>
        <taxon>Henophidia</taxon>
        <taxon>Boidae</taxon>
        <taxon>Boinae</taxon>
        <taxon>Acrantophis</taxon>
    </lineage>
</organism>
<reference key="1">
    <citation type="thesis" date="1997" institute="Queen's University / Kingston" country="Canada">
        <title>Hic Sunt Serpentes -- molecular phylogenetics and the Boidae (Serpentes: Booidea).</title>
        <authorList>
            <person name="Campbell B.N."/>
        </authorList>
    </citation>
    <scope>NUCLEOTIDE SEQUENCE [GENOMIC DNA]</scope>
</reference>
<dbReference type="EMBL" id="U69736">
    <property type="protein sequence ID" value="AAD13428.1"/>
    <property type="molecule type" value="Genomic_DNA"/>
</dbReference>
<dbReference type="SMR" id="O48012"/>
<dbReference type="GO" id="GO:0005743">
    <property type="term" value="C:mitochondrial inner membrane"/>
    <property type="evidence" value="ECO:0007669"/>
    <property type="project" value="UniProtKB-SubCell"/>
</dbReference>
<dbReference type="GO" id="GO:0045275">
    <property type="term" value="C:respiratory chain complex III"/>
    <property type="evidence" value="ECO:0007669"/>
    <property type="project" value="InterPro"/>
</dbReference>
<dbReference type="GO" id="GO:0046872">
    <property type="term" value="F:metal ion binding"/>
    <property type="evidence" value="ECO:0007669"/>
    <property type="project" value="UniProtKB-KW"/>
</dbReference>
<dbReference type="GO" id="GO:0008121">
    <property type="term" value="F:ubiquinol-cytochrome-c reductase activity"/>
    <property type="evidence" value="ECO:0007669"/>
    <property type="project" value="InterPro"/>
</dbReference>
<dbReference type="GO" id="GO:0006122">
    <property type="term" value="P:mitochondrial electron transport, ubiquinol to cytochrome c"/>
    <property type="evidence" value="ECO:0007669"/>
    <property type="project" value="TreeGrafter"/>
</dbReference>
<dbReference type="CDD" id="cd00290">
    <property type="entry name" value="cytochrome_b_C"/>
    <property type="match status" value="1"/>
</dbReference>
<dbReference type="CDD" id="cd00284">
    <property type="entry name" value="Cytochrome_b_N"/>
    <property type="match status" value="1"/>
</dbReference>
<dbReference type="Gene3D" id="1.20.810.10">
    <property type="entry name" value="Cytochrome Bc1 Complex, Chain C"/>
    <property type="match status" value="1"/>
</dbReference>
<dbReference type="InterPro" id="IPR005798">
    <property type="entry name" value="Cyt_b/b6_C"/>
</dbReference>
<dbReference type="InterPro" id="IPR036150">
    <property type="entry name" value="Cyt_b/b6_C_sf"/>
</dbReference>
<dbReference type="InterPro" id="IPR005797">
    <property type="entry name" value="Cyt_b/b6_N"/>
</dbReference>
<dbReference type="InterPro" id="IPR027387">
    <property type="entry name" value="Cytb/b6-like_sf"/>
</dbReference>
<dbReference type="InterPro" id="IPR030689">
    <property type="entry name" value="Cytochrome_b"/>
</dbReference>
<dbReference type="InterPro" id="IPR048260">
    <property type="entry name" value="Cytochrome_b_C_euk/bac"/>
</dbReference>
<dbReference type="InterPro" id="IPR048259">
    <property type="entry name" value="Cytochrome_b_N_euk/bac"/>
</dbReference>
<dbReference type="InterPro" id="IPR016174">
    <property type="entry name" value="Di-haem_cyt_TM"/>
</dbReference>
<dbReference type="PANTHER" id="PTHR19271">
    <property type="entry name" value="CYTOCHROME B"/>
    <property type="match status" value="1"/>
</dbReference>
<dbReference type="PANTHER" id="PTHR19271:SF16">
    <property type="entry name" value="CYTOCHROME B"/>
    <property type="match status" value="1"/>
</dbReference>
<dbReference type="Pfam" id="PF00032">
    <property type="entry name" value="Cytochrom_B_C"/>
    <property type="match status" value="1"/>
</dbReference>
<dbReference type="Pfam" id="PF00033">
    <property type="entry name" value="Cytochrome_B"/>
    <property type="match status" value="1"/>
</dbReference>
<dbReference type="PIRSF" id="PIRSF038885">
    <property type="entry name" value="COB"/>
    <property type="match status" value="1"/>
</dbReference>
<dbReference type="SUPFAM" id="SSF81648">
    <property type="entry name" value="a domain/subunit of cytochrome bc1 complex (Ubiquinol-cytochrome c reductase)"/>
    <property type="match status" value="1"/>
</dbReference>
<dbReference type="SUPFAM" id="SSF81342">
    <property type="entry name" value="Transmembrane di-heme cytochromes"/>
    <property type="match status" value="1"/>
</dbReference>
<dbReference type="PROSITE" id="PS51003">
    <property type="entry name" value="CYTB_CTER"/>
    <property type="match status" value="1"/>
</dbReference>
<dbReference type="PROSITE" id="PS51002">
    <property type="entry name" value="CYTB_NTER"/>
    <property type="match status" value="1"/>
</dbReference>
<feature type="chain" id="PRO_0000060529" description="Cytochrome b">
    <location>
        <begin position="1"/>
        <end position="372"/>
    </location>
</feature>
<feature type="transmembrane region" description="Helical" evidence="2">
    <location>
        <begin position="25"/>
        <end position="45"/>
    </location>
</feature>
<feature type="transmembrane region" description="Helical" evidence="2">
    <location>
        <begin position="69"/>
        <end position="90"/>
    </location>
</feature>
<feature type="transmembrane region" description="Helical" evidence="2">
    <location>
        <begin position="105"/>
        <end position="125"/>
    </location>
</feature>
<feature type="transmembrane region" description="Helical" evidence="2">
    <location>
        <begin position="170"/>
        <end position="190"/>
    </location>
</feature>
<feature type="transmembrane region" description="Helical" evidence="2">
    <location>
        <begin position="218"/>
        <end position="238"/>
    </location>
</feature>
<feature type="transmembrane region" description="Helical" evidence="2">
    <location>
        <begin position="280"/>
        <end position="300"/>
    </location>
</feature>
<feature type="transmembrane region" description="Helical" evidence="2">
    <location>
        <begin position="312"/>
        <end position="332"/>
    </location>
</feature>
<feature type="transmembrane region" description="Helical" evidence="2">
    <location>
        <begin position="339"/>
        <end position="358"/>
    </location>
</feature>
<feature type="binding site" description="axial binding residue" evidence="2">
    <location>
        <position position="75"/>
    </location>
    <ligand>
        <name>heme b</name>
        <dbReference type="ChEBI" id="CHEBI:60344"/>
        <label>b562</label>
    </ligand>
    <ligandPart>
        <name>Fe</name>
        <dbReference type="ChEBI" id="CHEBI:18248"/>
    </ligandPart>
</feature>
<feature type="binding site" description="axial binding residue" evidence="2">
    <location>
        <position position="89"/>
    </location>
    <ligand>
        <name>heme b</name>
        <dbReference type="ChEBI" id="CHEBI:60344"/>
        <label>b566</label>
    </ligand>
    <ligandPart>
        <name>Fe</name>
        <dbReference type="ChEBI" id="CHEBI:18248"/>
    </ligandPart>
</feature>
<feature type="binding site" description="axial binding residue" evidence="2">
    <location>
        <position position="174"/>
    </location>
    <ligand>
        <name>heme b</name>
        <dbReference type="ChEBI" id="CHEBI:60344"/>
        <label>b562</label>
    </ligand>
    <ligandPart>
        <name>Fe</name>
        <dbReference type="ChEBI" id="CHEBI:18248"/>
    </ligandPart>
</feature>
<feature type="binding site" description="axial binding residue" evidence="2">
    <location>
        <position position="188"/>
    </location>
    <ligand>
        <name>heme b</name>
        <dbReference type="ChEBI" id="CHEBI:60344"/>
        <label>b566</label>
    </ligand>
    <ligandPart>
        <name>Fe</name>
        <dbReference type="ChEBI" id="CHEBI:18248"/>
    </ligandPart>
</feature>
<feature type="binding site" evidence="2">
    <location>
        <position position="193"/>
    </location>
    <ligand>
        <name>a ubiquinone</name>
        <dbReference type="ChEBI" id="CHEBI:16389"/>
    </ligand>
</feature>
<protein>
    <recommendedName>
        <fullName>Cytochrome b</fullName>
    </recommendedName>
    <alternativeName>
        <fullName>Complex III subunit 3</fullName>
    </alternativeName>
    <alternativeName>
        <fullName>Complex III subunit III</fullName>
    </alternativeName>
    <alternativeName>
        <fullName>Cytochrome b-c1 complex subunit 3</fullName>
    </alternativeName>
    <alternativeName>
        <fullName>Ubiquinol-cytochrome-c reductase complex cytochrome b subunit</fullName>
    </alternativeName>
</protein>
<keyword id="KW-0249">Electron transport</keyword>
<keyword id="KW-0349">Heme</keyword>
<keyword id="KW-0408">Iron</keyword>
<keyword id="KW-0472">Membrane</keyword>
<keyword id="KW-0479">Metal-binding</keyword>
<keyword id="KW-0496">Mitochondrion</keyword>
<keyword id="KW-0999">Mitochondrion inner membrane</keyword>
<keyword id="KW-0679">Respiratory chain</keyword>
<keyword id="KW-0812">Transmembrane</keyword>
<keyword id="KW-1133">Transmembrane helix</keyword>
<keyword id="KW-0813">Transport</keyword>
<keyword id="KW-0830">Ubiquinone</keyword>
<gene>
    <name type="primary">MT-CYB</name>
    <name type="synonym">COB</name>
    <name type="synonym">CYTB</name>
    <name type="synonym">MTCYB</name>
</gene>
<evidence type="ECO:0000250" key="1"/>
<evidence type="ECO:0000250" key="2">
    <source>
        <dbReference type="UniProtKB" id="P00157"/>
    </source>
</evidence>
<evidence type="ECO:0000255" key="3">
    <source>
        <dbReference type="PROSITE-ProRule" id="PRU00967"/>
    </source>
</evidence>
<evidence type="ECO:0000255" key="4">
    <source>
        <dbReference type="PROSITE-ProRule" id="PRU00968"/>
    </source>
</evidence>
<sequence length="372" mass="42372">MPHQQILMLFGLLPVATNISTWWNFGSMLLTCSALQIMTGFFLSMHYTANINLAFSSIVHVVRDVPHGWMMQNLHAIGASMFFICVYIHVARGLYYGSYLNKETWLSGTTLLIMLMATAFFGYVLPWGQMSFWAATVITNLLTAIPYLGTTMTTWLWGGFAINDPTLTRFFALHFILPFGIISLSSLHIMLLHEEGSSNPLGTNSDIDKIPFHPYHTYKDLFMISSMIMIMLLTISFIPDIFNDPENFSEANPLVTPQHIKPEWYFLFAYGILRSIPNKLGGALALAMSIMILLTVPFTHTANTRSMTFRPFMQLMFWTLVATFMIITWTATKPVEPPYTMISQVTSSLYFMFFMSNPIVGWLENKIMKTQL</sequence>
<accession>O48012</accession>
<name>CYB_ACRMA</name>
<geneLocation type="mitochondrion"/>
<comment type="function">
    <text evidence="2">Component of the ubiquinol-cytochrome c reductase complex (complex III or cytochrome b-c1 complex) that is part of the mitochondrial respiratory chain. The b-c1 complex mediates electron transfer from ubiquinol to cytochrome c. Contributes to the generation of a proton gradient across the mitochondrial membrane that is then used for ATP synthesis.</text>
</comment>
<comment type="cofactor">
    <cofactor evidence="2">
        <name>heme b</name>
        <dbReference type="ChEBI" id="CHEBI:60344"/>
    </cofactor>
    <text evidence="2">Binds 2 heme b groups non-covalently.</text>
</comment>
<comment type="subunit">
    <text evidence="2">The cytochrome bc1 complex contains 3 respiratory subunits (MT-CYB, CYC1 and UQCRFS1), 2 core proteins (UQCRC1 and UQCRC2) and probably 6 low-molecular weight proteins.</text>
</comment>
<comment type="subcellular location">
    <subcellularLocation>
        <location evidence="2">Mitochondrion inner membrane</location>
        <topology evidence="2">Multi-pass membrane protein</topology>
    </subcellularLocation>
</comment>
<comment type="miscellaneous">
    <text evidence="1">Heme 1 (or BL or b562) is low-potential and absorbs at about 562 nm, and heme 2 (or BH or b566) is high-potential and absorbs at about 566 nm.</text>
</comment>
<comment type="similarity">
    <text evidence="3 4">Belongs to the cytochrome b family.</text>
</comment>
<comment type="caution">
    <text evidence="2">The full-length protein contains only eight transmembrane helices, not nine as predicted by bioinformatics tools.</text>
</comment>
<proteinExistence type="inferred from homology"/>